<evidence type="ECO:0000255" key="1">
    <source>
        <dbReference type="HAMAP-Rule" id="MF_00269"/>
    </source>
</evidence>
<comment type="function">
    <text evidence="1">Thiol-specific peroxidase that catalyzes the reduction of hydrogen peroxide and organic hydroperoxides to water and alcohols, respectively. Plays a role in cell protection against oxidative stress by detoxifying peroxides.</text>
</comment>
<comment type="catalytic activity">
    <reaction evidence="1">
        <text>a hydroperoxide + [thioredoxin]-dithiol = an alcohol + [thioredoxin]-disulfide + H2O</text>
        <dbReference type="Rhea" id="RHEA:62620"/>
        <dbReference type="Rhea" id="RHEA-COMP:10698"/>
        <dbReference type="Rhea" id="RHEA-COMP:10700"/>
        <dbReference type="ChEBI" id="CHEBI:15377"/>
        <dbReference type="ChEBI" id="CHEBI:29950"/>
        <dbReference type="ChEBI" id="CHEBI:30879"/>
        <dbReference type="ChEBI" id="CHEBI:35924"/>
        <dbReference type="ChEBI" id="CHEBI:50058"/>
        <dbReference type="EC" id="1.11.1.24"/>
    </reaction>
</comment>
<comment type="subunit">
    <text evidence="1">Homodimer.</text>
</comment>
<comment type="miscellaneous">
    <text evidence="1">The active site is a conserved redox-active cysteine residue, the peroxidatic cysteine (C(P)), which makes the nucleophilic attack on the peroxide substrate. The peroxide oxidizes the C(P)-SH to cysteine sulfenic acid (C(P)-SOH), which then reacts with another cysteine residue, the resolving cysteine (C(R)), to form a disulfide bridge. The disulfide is subsequently reduced by an appropriate electron donor to complete the catalytic cycle. In this atypical 2-Cys peroxiredoxin, C(R) is present in the same subunit to form an intramolecular disulfide. The disulfide is subsequently reduced by thioredoxin.</text>
</comment>
<comment type="similarity">
    <text evidence="1">Belongs to the peroxiredoxin family. Tpx subfamily.</text>
</comment>
<reference key="1">
    <citation type="journal article" date="2005" name="J. Bacteriol.">
        <title>Whole-genome sequencing of Staphylococcus haemolyticus uncovers the extreme plasticity of its genome and the evolution of human-colonizing staphylococcal species.</title>
        <authorList>
            <person name="Takeuchi F."/>
            <person name="Watanabe S."/>
            <person name="Baba T."/>
            <person name="Yuzawa H."/>
            <person name="Ito T."/>
            <person name="Morimoto Y."/>
            <person name="Kuroda M."/>
            <person name="Cui L."/>
            <person name="Takahashi M."/>
            <person name="Ankai A."/>
            <person name="Baba S."/>
            <person name="Fukui S."/>
            <person name="Lee J.C."/>
            <person name="Hiramatsu K."/>
        </authorList>
    </citation>
    <scope>NUCLEOTIDE SEQUENCE [LARGE SCALE GENOMIC DNA]</scope>
    <source>
        <strain>JCSC1435</strain>
    </source>
</reference>
<accession>Q4L754</accession>
<proteinExistence type="inferred from homology"/>
<gene>
    <name evidence="1" type="primary">tpx</name>
    <name type="ordered locus">SH1212</name>
</gene>
<protein>
    <recommendedName>
        <fullName evidence="1">Thiol peroxidase</fullName>
        <shortName evidence="1">Tpx</shortName>
        <ecNumber evidence="1">1.11.1.24</ecNumber>
    </recommendedName>
    <alternativeName>
        <fullName evidence="1">Peroxiredoxin tpx</fullName>
        <shortName evidence="1">Prx</shortName>
    </alternativeName>
    <alternativeName>
        <fullName evidence="1">Thioredoxin peroxidase</fullName>
    </alternativeName>
    <alternativeName>
        <fullName evidence="1">Thioredoxin-dependent peroxiredoxin</fullName>
    </alternativeName>
</protein>
<feature type="chain" id="PRO_0000187906" description="Thiol peroxidase">
    <location>
        <begin position="1"/>
        <end position="164"/>
    </location>
</feature>
<feature type="domain" description="Thioredoxin" evidence="1">
    <location>
        <begin position="18"/>
        <end position="163"/>
    </location>
</feature>
<feature type="active site" description="Cysteine sulfenic acid (-SOH) intermediate" evidence="1">
    <location>
        <position position="60"/>
    </location>
</feature>
<feature type="disulfide bond" description="Redox-active" evidence="1">
    <location>
        <begin position="60"/>
        <end position="93"/>
    </location>
</feature>
<dbReference type="EC" id="1.11.1.24" evidence="1"/>
<dbReference type="EMBL" id="AP006716">
    <property type="protein sequence ID" value="BAE04521.1"/>
    <property type="molecule type" value="Genomic_DNA"/>
</dbReference>
<dbReference type="RefSeq" id="WP_011275511.1">
    <property type="nucleotide sequence ID" value="NC_007168.1"/>
</dbReference>
<dbReference type="SMR" id="Q4L754"/>
<dbReference type="GeneID" id="93780620"/>
<dbReference type="KEGG" id="sha:SH1212"/>
<dbReference type="eggNOG" id="COG2077">
    <property type="taxonomic scope" value="Bacteria"/>
</dbReference>
<dbReference type="HOGENOM" id="CLU_042529_12_0_9"/>
<dbReference type="OrthoDB" id="9781543at2"/>
<dbReference type="Proteomes" id="UP000000543">
    <property type="component" value="Chromosome"/>
</dbReference>
<dbReference type="GO" id="GO:0008379">
    <property type="term" value="F:thioredoxin peroxidase activity"/>
    <property type="evidence" value="ECO:0007669"/>
    <property type="project" value="UniProtKB-UniRule"/>
</dbReference>
<dbReference type="CDD" id="cd03014">
    <property type="entry name" value="PRX_Atyp2cys"/>
    <property type="match status" value="1"/>
</dbReference>
<dbReference type="Gene3D" id="3.40.30.10">
    <property type="entry name" value="Glutaredoxin"/>
    <property type="match status" value="1"/>
</dbReference>
<dbReference type="HAMAP" id="MF_00269">
    <property type="entry name" value="Tpx"/>
    <property type="match status" value="1"/>
</dbReference>
<dbReference type="InterPro" id="IPR013740">
    <property type="entry name" value="Redoxin"/>
</dbReference>
<dbReference type="InterPro" id="IPR036249">
    <property type="entry name" value="Thioredoxin-like_sf"/>
</dbReference>
<dbReference type="InterPro" id="IPR013766">
    <property type="entry name" value="Thioredoxin_domain"/>
</dbReference>
<dbReference type="InterPro" id="IPR002065">
    <property type="entry name" value="TPX"/>
</dbReference>
<dbReference type="InterPro" id="IPR018219">
    <property type="entry name" value="Tpx_CS"/>
</dbReference>
<dbReference type="InterPro" id="IPR050455">
    <property type="entry name" value="Tpx_Peroxidase_subfamily"/>
</dbReference>
<dbReference type="NCBIfam" id="NF001808">
    <property type="entry name" value="PRK00522.1"/>
    <property type="match status" value="1"/>
</dbReference>
<dbReference type="PANTHER" id="PTHR43110">
    <property type="entry name" value="THIOL PEROXIDASE"/>
    <property type="match status" value="1"/>
</dbReference>
<dbReference type="PANTHER" id="PTHR43110:SF1">
    <property type="entry name" value="THIOL PEROXIDASE"/>
    <property type="match status" value="1"/>
</dbReference>
<dbReference type="Pfam" id="PF08534">
    <property type="entry name" value="Redoxin"/>
    <property type="match status" value="1"/>
</dbReference>
<dbReference type="SUPFAM" id="SSF52833">
    <property type="entry name" value="Thioredoxin-like"/>
    <property type="match status" value="1"/>
</dbReference>
<dbReference type="PROSITE" id="PS51352">
    <property type="entry name" value="THIOREDOXIN_2"/>
    <property type="match status" value="1"/>
</dbReference>
<dbReference type="PROSITE" id="PS01265">
    <property type="entry name" value="TPX"/>
    <property type="match status" value="1"/>
</dbReference>
<sequence>MTQITFKNNPIHLAGSEVSEGQHAPDFKVLDNDLNEVSLENYKGQKKLISVVPSIDTGVCDQQTRKFNEEAAQEDGVVLTISADLPFAQKRWCASNGLDNVITLSDHKDLSFGQQYGVVMEELRLLARSVFVLDSNDKVVYKELVSEGTDFPNFDAALEAYRNI</sequence>
<organism>
    <name type="scientific">Staphylococcus haemolyticus (strain JCSC1435)</name>
    <dbReference type="NCBI Taxonomy" id="279808"/>
    <lineage>
        <taxon>Bacteria</taxon>
        <taxon>Bacillati</taxon>
        <taxon>Bacillota</taxon>
        <taxon>Bacilli</taxon>
        <taxon>Bacillales</taxon>
        <taxon>Staphylococcaceae</taxon>
        <taxon>Staphylococcus</taxon>
    </lineage>
</organism>
<keyword id="KW-0049">Antioxidant</keyword>
<keyword id="KW-1015">Disulfide bond</keyword>
<keyword id="KW-0560">Oxidoreductase</keyword>
<keyword id="KW-0575">Peroxidase</keyword>
<keyword id="KW-0676">Redox-active center</keyword>
<name>TPX_STAHJ</name>